<evidence type="ECO:0000255" key="1">
    <source>
        <dbReference type="HAMAP-Rule" id="MF_00059"/>
    </source>
</evidence>
<feature type="chain" id="PRO_0000296794" description="DNA-directed RNA polymerase subunit alpha">
    <location>
        <begin position="1"/>
        <end position="327"/>
    </location>
</feature>
<feature type="region of interest" description="Alpha N-terminal domain (alpha-NTD)" evidence="1">
    <location>
        <begin position="1"/>
        <end position="231"/>
    </location>
</feature>
<feature type="region of interest" description="Alpha C-terminal domain (alpha-CTD)" evidence="1">
    <location>
        <begin position="247"/>
        <end position="327"/>
    </location>
</feature>
<keyword id="KW-0240">DNA-directed RNA polymerase</keyword>
<keyword id="KW-0548">Nucleotidyltransferase</keyword>
<keyword id="KW-1185">Reference proteome</keyword>
<keyword id="KW-0804">Transcription</keyword>
<keyword id="KW-0808">Transferase</keyword>
<dbReference type="EC" id="2.7.7.6" evidence="1"/>
<dbReference type="EMBL" id="CP000492">
    <property type="protein sequence ID" value="ABL66384.1"/>
    <property type="molecule type" value="Genomic_DNA"/>
</dbReference>
<dbReference type="RefSeq" id="WP_011746167.1">
    <property type="nucleotide sequence ID" value="NC_008639.1"/>
</dbReference>
<dbReference type="SMR" id="A1BJ07"/>
<dbReference type="STRING" id="290317.Cpha266_2396"/>
<dbReference type="KEGG" id="cph:Cpha266_2396"/>
<dbReference type="eggNOG" id="COG0202">
    <property type="taxonomic scope" value="Bacteria"/>
</dbReference>
<dbReference type="HOGENOM" id="CLU_053084_0_1_10"/>
<dbReference type="OrthoDB" id="9805706at2"/>
<dbReference type="Proteomes" id="UP000008701">
    <property type="component" value="Chromosome"/>
</dbReference>
<dbReference type="GO" id="GO:0005737">
    <property type="term" value="C:cytoplasm"/>
    <property type="evidence" value="ECO:0007669"/>
    <property type="project" value="UniProtKB-ARBA"/>
</dbReference>
<dbReference type="GO" id="GO:0000428">
    <property type="term" value="C:DNA-directed RNA polymerase complex"/>
    <property type="evidence" value="ECO:0007669"/>
    <property type="project" value="UniProtKB-KW"/>
</dbReference>
<dbReference type="GO" id="GO:0003677">
    <property type="term" value="F:DNA binding"/>
    <property type="evidence" value="ECO:0007669"/>
    <property type="project" value="UniProtKB-UniRule"/>
</dbReference>
<dbReference type="GO" id="GO:0003899">
    <property type="term" value="F:DNA-directed RNA polymerase activity"/>
    <property type="evidence" value="ECO:0007669"/>
    <property type="project" value="UniProtKB-UniRule"/>
</dbReference>
<dbReference type="GO" id="GO:0046983">
    <property type="term" value="F:protein dimerization activity"/>
    <property type="evidence" value="ECO:0007669"/>
    <property type="project" value="InterPro"/>
</dbReference>
<dbReference type="GO" id="GO:0006351">
    <property type="term" value="P:DNA-templated transcription"/>
    <property type="evidence" value="ECO:0007669"/>
    <property type="project" value="UniProtKB-UniRule"/>
</dbReference>
<dbReference type="CDD" id="cd06928">
    <property type="entry name" value="RNAP_alpha_NTD"/>
    <property type="match status" value="1"/>
</dbReference>
<dbReference type="FunFam" id="2.170.120.12:FF:000001">
    <property type="entry name" value="DNA-directed RNA polymerase subunit alpha"/>
    <property type="match status" value="1"/>
</dbReference>
<dbReference type="Gene3D" id="1.10.150.20">
    <property type="entry name" value="5' to 3' exonuclease, C-terminal subdomain"/>
    <property type="match status" value="1"/>
</dbReference>
<dbReference type="Gene3D" id="2.170.120.12">
    <property type="entry name" value="DNA-directed RNA polymerase, insert domain"/>
    <property type="match status" value="1"/>
</dbReference>
<dbReference type="Gene3D" id="3.30.1360.10">
    <property type="entry name" value="RNA polymerase, RBP11-like subunit"/>
    <property type="match status" value="1"/>
</dbReference>
<dbReference type="HAMAP" id="MF_00059">
    <property type="entry name" value="RNApol_bact_RpoA"/>
    <property type="match status" value="1"/>
</dbReference>
<dbReference type="InterPro" id="IPR011262">
    <property type="entry name" value="DNA-dir_RNA_pol_insert"/>
</dbReference>
<dbReference type="InterPro" id="IPR011263">
    <property type="entry name" value="DNA-dir_RNA_pol_RpoA/D/Rpb3"/>
</dbReference>
<dbReference type="InterPro" id="IPR011773">
    <property type="entry name" value="DNA-dir_RpoA"/>
</dbReference>
<dbReference type="InterPro" id="IPR036603">
    <property type="entry name" value="RBP11-like"/>
</dbReference>
<dbReference type="InterPro" id="IPR011260">
    <property type="entry name" value="RNAP_asu_C"/>
</dbReference>
<dbReference type="InterPro" id="IPR036643">
    <property type="entry name" value="RNApol_insert_sf"/>
</dbReference>
<dbReference type="NCBIfam" id="NF003513">
    <property type="entry name" value="PRK05182.1-2"/>
    <property type="match status" value="1"/>
</dbReference>
<dbReference type="NCBIfam" id="NF003519">
    <property type="entry name" value="PRK05182.2-5"/>
    <property type="match status" value="1"/>
</dbReference>
<dbReference type="NCBIfam" id="TIGR02027">
    <property type="entry name" value="rpoA"/>
    <property type="match status" value="1"/>
</dbReference>
<dbReference type="Pfam" id="PF01000">
    <property type="entry name" value="RNA_pol_A_bac"/>
    <property type="match status" value="1"/>
</dbReference>
<dbReference type="Pfam" id="PF03118">
    <property type="entry name" value="RNA_pol_A_CTD"/>
    <property type="match status" value="1"/>
</dbReference>
<dbReference type="Pfam" id="PF01193">
    <property type="entry name" value="RNA_pol_L"/>
    <property type="match status" value="1"/>
</dbReference>
<dbReference type="SMART" id="SM00662">
    <property type="entry name" value="RPOLD"/>
    <property type="match status" value="1"/>
</dbReference>
<dbReference type="SUPFAM" id="SSF47789">
    <property type="entry name" value="C-terminal domain of RNA polymerase alpha subunit"/>
    <property type="match status" value="1"/>
</dbReference>
<dbReference type="SUPFAM" id="SSF56553">
    <property type="entry name" value="Insert subdomain of RNA polymerase alpha subunit"/>
    <property type="match status" value="1"/>
</dbReference>
<dbReference type="SUPFAM" id="SSF55257">
    <property type="entry name" value="RBP11-like subunits of RNA polymerase"/>
    <property type="match status" value="1"/>
</dbReference>
<proteinExistence type="inferred from homology"/>
<sequence>MIYQMQMPAKIEVDEATHTEMFGRFIAQPLERGYGVTIGNVMRRVLLASLPGTAITGVKIEGVYHEFSAIEGVREDVPEIVLNLKRVRFKSNCKRSCKTSLSIAGTKDFTAGDIIAKEGEFEVLNKDLHIATVNDGSVLNIEIYIGRGRGYLPAEENHPEGMPIGFIAIDAIFTPIRNVKFTVENTRVGQRTDYEKMILDVETDGSIAPDDSISLAGKIINDHIMYFANFSPTEEEFTEEEFKQQDDEFESMRKLLHTKIEDLDLSVRSHNCLRLAEIDTIGDLVSRKEDELLNYKNFGKKSLTELKEQLEKFDLKFGMDITRYQMK</sequence>
<organism>
    <name type="scientific">Chlorobium phaeobacteroides (strain DSM 266 / SMG 266 / 2430)</name>
    <dbReference type="NCBI Taxonomy" id="290317"/>
    <lineage>
        <taxon>Bacteria</taxon>
        <taxon>Pseudomonadati</taxon>
        <taxon>Chlorobiota</taxon>
        <taxon>Chlorobiia</taxon>
        <taxon>Chlorobiales</taxon>
        <taxon>Chlorobiaceae</taxon>
        <taxon>Chlorobium/Pelodictyon group</taxon>
        <taxon>Chlorobium</taxon>
    </lineage>
</organism>
<accession>A1BJ07</accession>
<gene>
    <name evidence="1" type="primary">rpoA</name>
    <name type="ordered locus">Cpha266_2396</name>
</gene>
<reference key="1">
    <citation type="submission" date="2006-12" db="EMBL/GenBank/DDBJ databases">
        <title>Complete sequence of Chlorobium phaeobacteroides DSM 266.</title>
        <authorList>
            <consortium name="US DOE Joint Genome Institute"/>
            <person name="Copeland A."/>
            <person name="Lucas S."/>
            <person name="Lapidus A."/>
            <person name="Barry K."/>
            <person name="Detter J.C."/>
            <person name="Glavina del Rio T."/>
            <person name="Hammon N."/>
            <person name="Israni S."/>
            <person name="Pitluck S."/>
            <person name="Goltsman E."/>
            <person name="Schmutz J."/>
            <person name="Larimer F."/>
            <person name="Land M."/>
            <person name="Hauser L."/>
            <person name="Mikhailova N."/>
            <person name="Li T."/>
            <person name="Overmann J."/>
            <person name="Bryant D.A."/>
            <person name="Richardson P."/>
        </authorList>
    </citation>
    <scope>NUCLEOTIDE SEQUENCE [LARGE SCALE GENOMIC DNA]</scope>
    <source>
        <strain>DSM 266 / SMG 266 / 2430</strain>
    </source>
</reference>
<name>RPOA_CHLPD</name>
<protein>
    <recommendedName>
        <fullName evidence="1">DNA-directed RNA polymerase subunit alpha</fullName>
        <shortName evidence="1">RNAP subunit alpha</shortName>
        <ecNumber evidence="1">2.7.7.6</ecNumber>
    </recommendedName>
    <alternativeName>
        <fullName evidence="1">RNA polymerase subunit alpha</fullName>
    </alternativeName>
    <alternativeName>
        <fullName evidence="1">Transcriptase subunit alpha</fullName>
    </alternativeName>
</protein>
<comment type="function">
    <text evidence="1">DNA-dependent RNA polymerase catalyzes the transcription of DNA into RNA using the four ribonucleoside triphosphates as substrates.</text>
</comment>
<comment type="catalytic activity">
    <reaction evidence="1">
        <text>RNA(n) + a ribonucleoside 5'-triphosphate = RNA(n+1) + diphosphate</text>
        <dbReference type="Rhea" id="RHEA:21248"/>
        <dbReference type="Rhea" id="RHEA-COMP:14527"/>
        <dbReference type="Rhea" id="RHEA-COMP:17342"/>
        <dbReference type="ChEBI" id="CHEBI:33019"/>
        <dbReference type="ChEBI" id="CHEBI:61557"/>
        <dbReference type="ChEBI" id="CHEBI:140395"/>
        <dbReference type="EC" id="2.7.7.6"/>
    </reaction>
</comment>
<comment type="subunit">
    <text evidence="1">Homodimer. The RNAP catalytic core consists of 2 alpha, 1 beta, 1 beta' and 1 omega subunit. When a sigma factor is associated with the core the holoenzyme is formed, which can initiate transcription.</text>
</comment>
<comment type="domain">
    <text evidence="1">The N-terminal domain is essential for RNAP assembly and basal transcription, whereas the C-terminal domain is involved in interaction with transcriptional regulators and with upstream promoter elements.</text>
</comment>
<comment type="similarity">
    <text evidence="1">Belongs to the RNA polymerase alpha chain family.</text>
</comment>